<organismHost>
    <name type="scientific">Homo sapiens</name>
    <name type="common">Human</name>
    <dbReference type="NCBI Taxonomy" id="9606"/>
</organismHost>
<evidence type="ECO:0000250" key="1"/>
<evidence type="ECO:0000250" key="2">
    <source>
        <dbReference type="UniProtKB" id="P0C6L3"/>
    </source>
</evidence>
<evidence type="ECO:0000250" key="3">
    <source>
        <dbReference type="UniProtKB" id="P29996"/>
    </source>
</evidence>
<evidence type="ECO:0000255" key="4"/>
<evidence type="ECO:0000255" key="5">
    <source>
        <dbReference type="PROSITE-ProRule" id="PRU01183"/>
    </source>
</evidence>
<evidence type="ECO:0000256" key="6">
    <source>
        <dbReference type="SAM" id="MobiDB-lite"/>
    </source>
</evidence>
<evidence type="ECO:0000269" key="7">
    <source>
    </source>
</evidence>
<evidence type="ECO:0000305" key="8"/>
<accession>P0C6M7</accession>
<name>LHDAG_HDVV3</name>
<reference key="1">
    <citation type="journal article" date="2001" name="J. Gen. Virol.">
        <title>Characterization of hepatitis D virus genotype III among Yucpa Indians in Venezuela.</title>
        <authorList>
            <person name="Nakano T."/>
            <person name="Shapiro C.N."/>
            <person name="Hadler S.C."/>
            <person name="Casey J.L."/>
            <person name="Mizokami M."/>
            <person name="Orito E."/>
            <person name="Robertson B.H."/>
        </authorList>
    </citation>
    <scope>NUCLEOTIDE SEQUENCE [GENOMIC RNA]</scope>
    <scope>RNA EDITING</scope>
</reference>
<reference key="2">
    <citation type="journal article" date="2005" name="Acta Virol.">
        <title>Hepatitis D.</title>
        <authorList>
            <person name="Husa P."/>
            <person name="Linhartova A."/>
            <person name="Nemecek V."/>
            <person name="Husova L."/>
        </authorList>
    </citation>
    <scope>REVIEW</scope>
</reference>
<reference key="3">
    <citation type="journal article" date="2006" name="Curr. Top. Microbiol. Immunol.">
        <title>Post-translational modification of delta antigen of hepatitis D virus.</title>
        <authorList>
            <person name="Huang W.H."/>
            <person name="Chen C.W."/>
            <person name="Wu H.L."/>
            <person name="Chen P.J."/>
        </authorList>
    </citation>
    <scope>REVIEW</scope>
</reference>
<feature type="chain" id="PRO_0000038154" description="Large delta antigen">
    <location>
        <begin position="1"/>
        <end position="211"/>
    </location>
</feature>
<feature type="propeptide" id="PRO_0000396681" description="Removed in mature form" evidence="3">
    <location>
        <begin position="212"/>
        <end position="214"/>
    </location>
</feature>
<feature type="domain" description="HDAg" evidence="5">
    <location>
        <begin position="20"/>
        <end position="194"/>
    </location>
</feature>
<feature type="region of interest" description="Disordered" evidence="6">
    <location>
        <begin position="1"/>
        <end position="25"/>
    </location>
</feature>
<feature type="region of interest" description="Dimerization" evidence="4">
    <location>
        <begin position="12"/>
        <end position="59"/>
    </location>
</feature>
<feature type="region of interest" description="Disordered" evidence="6">
    <location>
        <begin position="43"/>
        <end position="185"/>
    </location>
</feature>
<feature type="region of interest" description="RNA-binding" evidence="5">
    <location>
        <begin position="96"/>
        <end position="106"/>
    </location>
</feature>
<feature type="region of interest" description="RNAPII-binding" evidence="5">
    <location>
        <begin position="129"/>
        <end position="194"/>
    </location>
</feature>
<feature type="region of interest" description="RNA-binding" evidence="5">
    <location>
        <begin position="135"/>
        <end position="145"/>
    </location>
</feature>
<feature type="short sequence motif" description="Nuclear localization signal" evidence="3">
    <location>
        <begin position="65"/>
        <end position="74"/>
    </location>
</feature>
<feature type="compositionally biased region" description="Basic and acidic residues" evidence="6">
    <location>
        <begin position="11"/>
        <end position="25"/>
    </location>
</feature>
<feature type="compositionally biased region" description="Basic and acidic residues" evidence="6">
    <location>
        <begin position="128"/>
        <end position="143"/>
    </location>
</feature>
<feature type="modified residue" description="Phosphoserine; by host" evidence="3">
    <location>
        <position position="2"/>
    </location>
</feature>
<feature type="modified residue" description="Omega-N-methylated arginine; by host" evidence="2">
    <location>
        <position position="13"/>
    </location>
</feature>
<feature type="modified residue" description="N6-acetyllysine; by host" evidence="2">
    <location>
        <position position="71"/>
    </location>
</feature>
<feature type="modified residue" description="Phosphoserine; by host" evidence="3">
    <location>
        <position position="122"/>
    </location>
</feature>
<feature type="modified residue" description="Phosphoserine; by host" evidence="3">
    <location>
        <position position="176"/>
    </location>
</feature>
<feature type="modified residue" description="Cysteine methyl ester; by host" evidence="3">
    <location>
        <position position="211"/>
    </location>
</feature>
<feature type="lipid moiety-binding region" description="S-farnesyl cysteine; by host" evidence="3">
    <location>
        <position position="211"/>
    </location>
</feature>
<sequence length="214" mass="24386">MSQPDARPGSKAREEALEQWVEERKKKRIAEKELRRINKKIKKLEDENPWLGNIVGMLRKKKDEEGGPPAKRPRREDMEIDSTPGRKSKARGFTDQERRDHRRRKALENKKKQLAGGGKNLSREEEEELRRLARDDDERERRVAGPRPGGVNPMDGPPRGAPGGGFVPSLQGVPESPFSRTGEGIDIRGTQQFPWYGFTPPPPGYYWVPGCTQQ</sequence>
<comment type="function">
    <text evidence="1">Following virus entry into host cell, provides nuclear import of HDV RNPs thanks to its nuclear localization signal. Needs co-infection with hepatitis B virus to provide surface proteins, otherwise there is no packaging or budding. Packages the HDV ribonucleoprotein in hepatitis B virus empty particles. Interacts with both HDV genomic RNA and cytoplasmic tail of HBsAg. May inhibit viral RNA replication (By similarity).</text>
</comment>
<comment type="subunit">
    <text evidence="1">Homodimer. Homooctamer. Interacts with HBV HBsAg. May interact with clathrin to induce virion budding (By similarity).</text>
</comment>
<comment type="subcellular location">
    <subcellularLocation>
        <location>Virion</location>
    </subcellularLocation>
    <subcellularLocation>
        <location>Host nucleus</location>
        <location>Host nucleolus</location>
    </subcellularLocation>
    <text evidence="1">isoprenylated in the cytoplasm, and translocates in the nucleus possibly after phosphorylation. Translocates after to nuclear speckle, then to the ER membrane where interaction with Hepatitis B virus antigene takes place (By similarity).</text>
</comment>
<comment type="PTM">
    <text evidence="1">Prenylated by host farnesyl-transferase in the cytoplasm prior to nucleus translocation.</text>
</comment>
<comment type="PTM">
    <text evidence="1">Phosphorylated at serines by host CK2 and other kinases. phosphorylation does not seem to be important for its function (By similarity).</text>
</comment>
<comment type="RNA editing">
    <location>
        <position position="196" evidence="7"/>
    </location>
    <text evidence="1">Partially edited. RNA editing at this position occurs on the antigenomic strand and consists of a conversion of A to G catalyzed by the cellular enzyme ADAR1. The unedited RNA version gives rise to the small delta antigen (AC Q91DH9), which ends with a nonsense codon at position 196. In the edited version, this amber codon is modified to a tryptophan codon and gives rise to the large delta antigen protein. S-HDAg suppresses editing of non-replicating antigenomic RNA, thereby regulating the extent of editing (By similarity).</text>
</comment>
<comment type="miscellaneous">
    <text>This strain belongs to the genotype III found only among cases in South America and which causes a more severe form of infection than genotypes I and II.</text>
</comment>
<comment type="similarity">
    <text evidence="8">Belongs to the hepatitis delta antigen family.</text>
</comment>
<keyword id="KW-0007">Acetylation</keyword>
<keyword id="KW-1048">Host nucleus</keyword>
<keyword id="KW-0449">Lipoprotein</keyword>
<keyword id="KW-0488">Methylation</keyword>
<keyword id="KW-0597">Phosphoprotein</keyword>
<keyword id="KW-0636">Prenylation</keyword>
<keyword id="KW-0691">RNA editing</keyword>
<keyword id="KW-0694">RNA-binding</keyword>
<keyword id="KW-1163">Viral penetration into host nucleus</keyword>
<keyword id="KW-0946">Virion</keyword>
<keyword id="KW-1160">Virus entry into host cell</keyword>
<organism>
    <name type="scientific">Hepatitis delta virus genotype III (isolate VnzD8375)</name>
    <name type="common">HDV</name>
    <dbReference type="NCBI Taxonomy" id="261995"/>
    <lineage>
        <taxon>Viruses</taxon>
        <taxon>Ribozyviria</taxon>
        <taxon>Kolmioviridae</taxon>
        <taxon>Deltavirus</taxon>
        <taxon>Hepatitis delta virus</taxon>
    </lineage>
</organism>
<protein>
    <recommendedName>
        <fullName>Large delta antigen</fullName>
        <shortName>L-HDAg</shortName>
    </recommendedName>
    <alternativeName>
        <fullName>p27</fullName>
    </alternativeName>
</protein>
<dbReference type="EMBL" id="AB037947">
    <property type="protein sequence ID" value="BAB68379.1"/>
    <property type="status" value="ALT_TERM"/>
    <property type="molecule type" value="Genomic_RNA"/>
</dbReference>
<dbReference type="SMR" id="P0C6M7"/>
<dbReference type="Proteomes" id="UP000008116">
    <property type="component" value="Genome"/>
</dbReference>
<dbReference type="GO" id="GO:0043657">
    <property type="term" value="C:host cell"/>
    <property type="evidence" value="ECO:0007669"/>
    <property type="project" value="GOC"/>
</dbReference>
<dbReference type="GO" id="GO:0044196">
    <property type="term" value="C:host cell nucleolus"/>
    <property type="evidence" value="ECO:0007669"/>
    <property type="project" value="UniProtKB-SubCell"/>
</dbReference>
<dbReference type="GO" id="GO:0044423">
    <property type="term" value="C:virion component"/>
    <property type="evidence" value="ECO:0007669"/>
    <property type="project" value="UniProtKB-KW"/>
</dbReference>
<dbReference type="GO" id="GO:0003723">
    <property type="term" value="F:RNA binding"/>
    <property type="evidence" value="ECO:0007669"/>
    <property type="project" value="UniProtKB-KW"/>
</dbReference>
<dbReference type="GO" id="GO:0046718">
    <property type="term" value="P:symbiont entry into host cell"/>
    <property type="evidence" value="ECO:0007669"/>
    <property type="project" value="UniProtKB-KW"/>
</dbReference>
<dbReference type="GO" id="GO:0075732">
    <property type="term" value="P:viral penetration into host nucleus"/>
    <property type="evidence" value="ECO:0007669"/>
    <property type="project" value="UniProtKB-KW"/>
</dbReference>
<dbReference type="Gene3D" id="4.10.220.40">
    <property type="entry name" value="Delta antigen, N-terminal"/>
    <property type="match status" value="1"/>
</dbReference>
<dbReference type="InterPro" id="IPR027403">
    <property type="entry name" value="Delta_antigen_N"/>
</dbReference>
<dbReference type="InterPro" id="IPR037517">
    <property type="entry name" value="HDAG_dom"/>
</dbReference>
<dbReference type="InterPro" id="IPR002506">
    <property type="entry name" value="HDV_ag"/>
</dbReference>
<dbReference type="Pfam" id="PF01517">
    <property type="entry name" value="HDV_ag"/>
    <property type="match status" value="1"/>
</dbReference>
<dbReference type="SUPFAM" id="SSF58108">
    <property type="entry name" value="Oligomerization domain of hepatitis delta antigen"/>
    <property type="match status" value="1"/>
</dbReference>
<dbReference type="PROSITE" id="PS51838">
    <property type="entry name" value="HDAG"/>
    <property type="match status" value="1"/>
</dbReference>
<proteinExistence type="inferred from homology"/>